<sequence length="409" mass="46575">MKKELLASLVLCLSLSPLVSTNEVFAATTNKETKENVSITNEIGYEKVKDMLEQQKYDFEHNTPLAHPKESKLTDSDEGVLLYSALSKVDKQKFHEFTYDIDDVKTSEKNNKLIVEAYITRNFVFGVEKVTTSLGDNIKLEIPKTTSNKQSSQSTNTSNLSFSQVKNSSNQLNVIPLSNSSKQLNVTQLNNSSSTLQYENDEEYSSDVKLDEFLKKYKQEVKNDDKEEVKSEDKPVSMNFNAANSNQLTVTATSVKGYSGYAAMKYAEKYALKPNKNYKYYKDKDCTNFVSQALRAGRMPYFKEWKPYTDAWVNAGAFRSYILKAGGIKMKTVSDTYSNVKLGDVYHYDYHNKIGLRYADGWMDHTAIVTSRANMKLYVSYHSTNRLNVPREYVTSKEGGKRYVSSIRN</sequence>
<evidence type="ECO:0000255" key="1"/>
<feature type="signal peptide" evidence="1">
    <location>
        <begin position="1"/>
        <end position="26"/>
    </location>
</feature>
<feature type="chain" id="PRO_0000369119" description="Uncharacterized protein YjcM">
    <location>
        <begin position="27"/>
        <end position="409"/>
    </location>
</feature>
<keyword id="KW-1185">Reference proteome</keyword>
<keyword id="KW-0732">Signal</keyword>
<name>YJCM_BACSU</name>
<organism>
    <name type="scientific">Bacillus subtilis (strain 168)</name>
    <dbReference type="NCBI Taxonomy" id="224308"/>
    <lineage>
        <taxon>Bacteria</taxon>
        <taxon>Bacillati</taxon>
        <taxon>Bacillota</taxon>
        <taxon>Bacilli</taxon>
        <taxon>Bacillales</taxon>
        <taxon>Bacillaceae</taxon>
        <taxon>Bacillus</taxon>
    </lineage>
</organism>
<accession>O31635</accession>
<dbReference type="EMBL" id="AL009126">
    <property type="protein sequence ID" value="CAB13048.1"/>
    <property type="molecule type" value="Genomic_DNA"/>
</dbReference>
<dbReference type="PIR" id="E69847">
    <property type="entry name" value="E69847"/>
</dbReference>
<dbReference type="RefSeq" id="NP_389073.1">
    <property type="nucleotide sequence ID" value="NC_000964.3"/>
</dbReference>
<dbReference type="RefSeq" id="WP_009967023.1">
    <property type="nucleotide sequence ID" value="NZ_OZ025638.1"/>
</dbReference>
<dbReference type="FunCoup" id="O31635">
    <property type="interactions" value="38"/>
</dbReference>
<dbReference type="STRING" id="224308.BSU11910"/>
<dbReference type="PaxDb" id="224308-BSU11910"/>
<dbReference type="DNASU" id="939395"/>
<dbReference type="EnsemblBacteria" id="CAB13048">
    <property type="protein sequence ID" value="CAB13048"/>
    <property type="gene ID" value="BSU_11910"/>
</dbReference>
<dbReference type="GeneID" id="939395"/>
<dbReference type="KEGG" id="bsu:BSU11910"/>
<dbReference type="PATRIC" id="fig|224308.179.peg.1284"/>
<dbReference type="eggNOG" id="ENOG50300Z5">
    <property type="taxonomic scope" value="Bacteria"/>
</dbReference>
<dbReference type="InParanoid" id="O31635"/>
<dbReference type="OrthoDB" id="9812429at2"/>
<dbReference type="BioCyc" id="BSUB:BSU11910-MONOMER"/>
<dbReference type="Proteomes" id="UP000001570">
    <property type="component" value="Chromosome"/>
</dbReference>
<dbReference type="InterPro" id="IPR024301">
    <property type="entry name" value="Amidase_6"/>
</dbReference>
<dbReference type="PANTHER" id="PTHR40032:SF1">
    <property type="entry name" value="EXPORTED PROTEIN"/>
    <property type="match status" value="1"/>
</dbReference>
<dbReference type="PANTHER" id="PTHR40032">
    <property type="entry name" value="EXPORTED PROTEIN-RELATED"/>
    <property type="match status" value="1"/>
</dbReference>
<dbReference type="Pfam" id="PF12671">
    <property type="entry name" value="Amidase_6"/>
    <property type="match status" value="1"/>
</dbReference>
<protein>
    <recommendedName>
        <fullName>Uncharacterized protein YjcM</fullName>
    </recommendedName>
</protein>
<gene>
    <name type="primary">yjcM</name>
    <name type="ordered locus">BSU11910</name>
</gene>
<proteinExistence type="inferred from homology"/>
<reference key="1">
    <citation type="journal article" date="1997" name="Nature">
        <title>The complete genome sequence of the Gram-positive bacterium Bacillus subtilis.</title>
        <authorList>
            <person name="Kunst F."/>
            <person name="Ogasawara N."/>
            <person name="Moszer I."/>
            <person name="Albertini A.M."/>
            <person name="Alloni G."/>
            <person name="Azevedo V."/>
            <person name="Bertero M.G."/>
            <person name="Bessieres P."/>
            <person name="Bolotin A."/>
            <person name="Borchert S."/>
            <person name="Borriss R."/>
            <person name="Boursier L."/>
            <person name="Brans A."/>
            <person name="Braun M."/>
            <person name="Brignell S.C."/>
            <person name="Bron S."/>
            <person name="Brouillet S."/>
            <person name="Bruschi C.V."/>
            <person name="Caldwell B."/>
            <person name="Capuano V."/>
            <person name="Carter N.M."/>
            <person name="Choi S.-K."/>
            <person name="Codani J.-J."/>
            <person name="Connerton I.F."/>
            <person name="Cummings N.J."/>
            <person name="Daniel R.A."/>
            <person name="Denizot F."/>
            <person name="Devine K.M."/>
            <person name="Duesterhoeft A."/>
            <person name="Ehrlich S.D."/>
            <person name="Emmerson P.T."/>
            <person name="Entian K.-D."/>
            <person name="Errington J."/>
            <person name="Fabret C."/>
            <person name="Ferrari E."/>
            <person name="Foulger D."/>
            <person name="Fritz C."/>
            <person name="Fujita M."/>
            <person name="Fujita Y."/>
            <person name="Fuma S."/>
            <person name="Galizzi A."/>
            <person name="Galleron N."/>
            <person name="Ghim S.-Y."/>
            <person name="Glaser P."/>
            <person name="Goffeau A."/>
            <person name="Golightly E.J."/>
            <person name="Grandi G."/>
            <person name="Guiseppi G."/>
            <person name="Guy B.J."/>
            <person name="Haga K."/>
            <person name="Haiech J."/>
            <person name="Harwood C.R."/>
            <person name="Henaut A."/>
            <person name="Hilbert H."/>
            <person name="Holsappel S."/>
            <person name="Hosono S."/>
            <person name="Hullo M.-F."/>
            <person name="Itaya M."/>
            <person name="Jones L.-M."/>
            <person name="Joris B."/>
            <person name="Karamata D."/>
            <person name="Kasahara Y."/>
            <person name="Klaerr-Blanchard M."/>
            <person name="Klein C."/>
            <person name="Kobayashi Y."/>
            <person name="Koetter P."/>
            <person name="Koningstein G."/>
            <person name="Krogh S."/>
            <person name="Kumano M."/>
            <person name="Kurita K."/>
            <person name="Lapidus A."/>
            <person name="Lardinois S."/>
            <person name="Lauber J."/>
            <person name="Lazarevic V."/>
            <person name="Lee S.-M."/>
            <person name="Levine A."/>
            <person name="Liu H."/>
            <person name="Masuda S."/>
            <person name="Mauel C."/>
            <person name="Medigue C."/>
            <person name="Medina N."/>
            <person name="Mellado R.P."/>
            <person name="Mizuno M."/>
            <person name="Moestl D."/>
            <person name="Nakai S."/>
            <person name="Noback M."/>
            <person name="Noone D."/>
            <person name="O'Reilly M."/>
            <person name="Ogawa K."/>
            <person name="Ogiwara A."/>
            <person name="Oudega B."/>
            <person name="Park S.-H."/>
            <person name="Parro V."/>
            <person name="Pohl T.M."/>
            <person name="Portetelle D."/>
            <person name="Porwollik S."/>
            <person name="Prescott A.M."/>
            <person name="Presecan E."/>
            <person name="Pujic P."/>
            <person name="Purnelle B."/>
            <person name="Rapoport G."/>
            <person name="Rey M."/>
            <person name="Reynolds S."/>
            <person name="Rieger M."/>
            <person name="Rivolta C."/>
            <person name="Rocha E."/>
            <person name="Roche B."/>
            <person name="Rose M."/>
            <person name="Sadaie Y."/>
            <person name="Sato T."/>
            <person name="Scanlan E."/>
            <person name="Schleich S."/>
            <person name="Schroeter R."/>
            <person name="Scoffone F."/>
            <person name="Sekiguchi J."/>
            <person name="Sekowska A."/>
            <person name="Seror S.J."/>
            <person name="Serror P."/>
            <person name="Shin B.-S."/>
            <person name="Soldo B."/>
            <person name="Sorokin A."/>
            <person name="Tacconi E."/>
            <person name="Takagi T."/>
            <person name="Takahashi H."/>
            <person name="Takemaru K."/>
            <person name="Takeuchi M."/>
            <person name="Tamakoshi A."/>
            <person name="Tanaka T."/>
            <person name="Terpstra P."/>
            <person name="Tognoni A."/>
            <person name="Tosato V."/>
            <person name="Uchiyama S."/>
            <person name="Vandenbol M."/>
            <person name="Vannier F."/>
            <person name="Vassarotti A."/>
            <person name="Viari A."/>
            <person name="Wambutt R."/>
            <person name="Wedler E."/>
            <person name="Wedler H."/>
            <person name="Weitzenegger T."/>
            <person name="Winters P."/>
            <person name="Wipat A."/>
            <person name="Yamamoto H."/>
            <person name="Yamane K."/>
            <person name="Yasumoto K."/>
            <person name="Yata K."/>
            <person name="Yoshida K."/>
            <person name="Yoshikawa H.-F."/>
            <person name="Zumstein E."/>
            <person name="Yoshikawa H."/>
            <person name="Danchin A."/>
        </authorList>
    </citation>
    <scope>NUCLEOTIDE SEQUENCE [LARGE SCALE GENOMIC DNA]</scope>
    <source>
        <strain>168</strain>
    </source>
</reference>